<name>HUTH_CERS1</name>
<reference key="1">
    <citation type="submission" date="2007-02" db="EMBL/GenBank/DDBJ databases">
        <title>Complete sequence of chromosome 1 of Rhodobacter sphaeroides ATCC 17029.</title>
        <authorList>
            <person name="Copeland A."/>
            <person name="Lucas S."/>
            <person name="Lapidus A."/>
            <person name="Barry K."/>
            <person name="Detter J.C."/>
            <person name="Glavina del Rio T."/>
            <person name="Hammon N."/>
            <person name="Israni S."/>
            <person name="Dalin E."/>
            <person name="Tice H."/>
            <person name="Pitluck S."/>
            <person name="Kiss H."/>
            <person name="Brettin T."/>
            <person name="Bruce D."/>
            <person name="Han C."/>
            <person name="Tapia R."/>
            <person name="Gilna P."/>
            <person name="Schmutz J."/>
            <person name="Larimer F."/>
            <person name="Land M."/>
            <person name="Hauser L."/>
            <person name="Kyrpides N."/>
            <person name="Mikhailova N."/>
            <person name="Richardson P."/>
            <person name="Mackenzie C."/>
            <person name="Choudhary M."/>
            <person name="Donohue T.J."/>
            <person name="Kaplan S."/>
        </authorList>
    </citation>
    <scope>NUCLEOTIDE SEQUENCE [LARGE SCALE GENOMIC DNA]</scope>
    <source>
        <strain>ATCC 17029 / ATH 2.4.9</strain>
    </source>
</reference>
<protein>
    <recommendedName>
        <fullName evidence="1">Histidine ammonia-lyase</fullName>
        <shortName evidence="1">Histidase</shortName>
        <ecNumber evidence="1">4.3.1.3</ecNumber>
    </recommendedName>
</protein>
<gene>
    <name evidence="1" type="primary">hutH</name>
    <name type="ordered locus">Rsph17029_1579</name>
</gene>
<accession>A3PK23</accession>
<keyword id="KW-0963">Cytoplasm</keyword>
<keyword id="KW-0369">Histidine metabolism</keyword>
<keyword id="KW-0456">Lyase</keyword>
<feature type="chain" id="PRO_0000336587" description="Histidine ammonia-lyase">
    <location>
        <begin position="1"/>
        <end position="507"/>
    </location>
</feature>
<feature type="modified residue" description="2,3-didehydroalanine (Ser)" evidence="1">
    <location>
        <position position="142"/>
    </location>
</feature>
<feature type="cross-link" description="5-imidazolinone (Ala-Gly)" evidence="1">
    <location>
        <begin position="141"/>
        <end position="143"/>
    </location>
</feature>
<dbReference type="EC" id="4.3.1.3" evidence="1"/>
<dbReference type="EMBL" id="CP000577">
    <property type="protein sequence ID" value="ABN76689.1"/>
    <property type="molecule type" value="Genomic_DNA"/>
</dbReference>
<dbReference type="RefSeq" id="WP_011841111.1">
    <property type="nucleotide sequence ID" value="NC_009049.1"/>
</dbReference>
<dbReference type="SMR" id="A3PK23"/>
<dbReference type="KEGG" id="rsh:Rsph17029_1579"/>
<dbReference type="HOGENOM" id="CLU_014801_4_0_5"/>
<dbReference type="UniPathway" id="UPA00379">
    <property type="reaction ID" value="UER00549"/>
</dbReference>
<dbReference type="GO" id="GO:0005737">
    <property type="term" value="C:cytoplasm"/>
    <property type="evidence" value="ECO:0007669"/>
    <property type="project" value="UniProtKB-SubCell"/>
</dbReference>
<dbReference type="GO" id="GO:0004397">
    <property type="term" value="F:histidine ammonia-lyase activity"/>
    <property type="evidence" value="ECO:0007669"/>
    <property type="project" value="UniProtKB-UniRule"/>
</dbReference>
<dbReference type="GO" id="GO:0019556">
    <property type="term" value="P:L-histidine catabolic process to glutamate and formamide"/>
    <property type="evidence" value="ECO:0007669"/>
    <property type="project" value="UniProtKB-UniPathway"/>
</dbReference>
<dbReference type="GO" id="GO:0019557">
    <property type="term" value="P:L-histidine catabolic process to glutamate and formate"/>
    <property type="evidence" value="ECO:0007669"/>
    <property type="project" value="UniProtKB-UniPathway"/>
</dbReference>
<dbReference type="CDD" id="cd00332">
    <property type="entry name" value="PAL-HAL"/>
    <property type="match status" value="1"/>
</dbReference>
<dbReference type="FunFam" id="1.10.275.10:FF:000005">
    <property type="entry name" value="Histidine ammonia-lyase"/>
    <property type="match status" value="1"/>
</dbReference>
<dbReference type="FunFam" id="1.20.200.10:FF:000003">
    <property type="entry name" value="Histidine ammonia-lyase"/>
    <property type="match status" value="1"/>
</dbReference>
<dbReference type="Gene3D" id="1.20.200.10">
    <property type="entry name" value="Fumarase/aspartase (Central domain)"/>
    <property type="match status" value="1"/>
</dbReference>
<dbReference type="Gene3D" id="1.10.275.10">
    <property type="entry name" value="Fumarase/aspartase (N-terminal domain)"/>
    <property type="match status" value="1"/>
</dbReference>
<dbReference type="HAMAP" id="MF_00229">
    <property type="entry name" value="His_ammonia_lyase"/>
    <property type="match status" value="1"/>
</dbReference>
<dbReference type="InterPro" id="IPR001106">
    <property type="entry name" value="Aromatic_Lyase"/>
</dbReference>
<dbReference type="InterPro" id="IPR024083">
    <property type="entry name" value="Fumarase/histidase_N"/>
</dbReference>
<dbReference type="InterPro" id="IPR005921">
    <property type="entry name" value="HutH"/>
</dbReference>
<dbReference type="InterPro" id="IPR008948">
    <property type="entry name" value="L-Aspartase-like"/>
</dbReference>
<dbReference type="InterPro" id="IPR022313">
    <property type="entry name" value="Phe/His_NH3-lyase_AS"/>
</dbReference>
<dbReference type="NCBIfam" id="TIGR01225">
    <property type="entry name" value="hutH"/>
    <property type="match status" value="1"/>
</dbReference>
<dbReference type="NCBIfam" id="NF006871">
    <property type="entry name" value="PRK09367.1"/>
    <property type="match status" value="1"/>
</dbReference>
<dbReference type="PANTHER" id="PTHR10362">
    <property type="entry name" value="HISTIDINE AMMONIA-LYASE"/>
    <property type="match status" value="1"/>
</dbReference>
<dbReference type="Pfam" id="PF00221">
    <property type="entry name" value="Lyase_aromatic"/>
    <property type="match status" value="1"/>
</dbReference>
<dbReference type="SUPFAM" id="SSF48557">
    <property type="entry name" value="L-aspartase-like"/>
    <property type="match status" value="1"/>
</dbReference>
<dbReference type="PROSITE" id="PS00488">
    <property type="entry name" value="PAL_HISTIDASE"/>
    <property type="match status" value="1"/>
</dbReference>
<evidence type="ECO:0000255" key="1">
    <source>
        <dbReference type="HAMAP-Rule" id="MF_00229"/>
    </source>
</evidence>
<organism>
    <name type="scientific">Cereibacter sphaeroides (strain ATCC 17029 / ATH 2.4.9)</name>
    <name type="common">Rhodobacter sphaeroides</name>
    <dbReference type="NCBI Taxonomy" id="349101"/>
    <lineage>
        <taxon>Bacteria</taxon>
        <taxon>Pseudomonadati</taxon>
        <taxon>Pseudomonadota</taxon>
        <taxon>Alphaproteobacteria</taxon>
        <taxon>Rhodobacterales</taxon>
        <taxon>Paracoccaceae</taxon>
        <taxon>Cereibacter</taxon>
    </lineage>
</organism>
<comment type="catalytic activity">
    <reaction evidence="1">
        <text>L-histidine = trans-urocanate + NH4(+)</text>
        <dbReference type="Rhea" id="RHEA:21232"/>
        <dbReference type="ChEBI" id="CHEBI:17771"/>
        <dbReference type="ChEBI" id="CHEBI:28938"/>
        <dbReference type="ChEBI" id="CHEBI:57595"/>
        <dbReference type="EC" id="4.3.1.3"/>
    </reaction>
</comment>
<comment type="pathway">
    <text evidence="1">Amino-acid degradation; L-histidine degradation into L-glutamate; N-formimidoyl-L-glutamate from L-histidine: step 1/3.</text>
</comment>
<comment type="subcellular location">
    <subcellularLocation>
        <location evidence="1">Cytoplasm</location>
    </subcellularLocation>
</comment>
<comment type="PTM">
    <text evidence="1">Contains an active site 4-methylidene-imidazol-5-one (MIO), which is formed autocatalytically by cyclization and dehydration of residues Ala-Ser-Gly.</text>
</comment>
<comment type="similarity">
    <text evidence="1">Belongs to the PAL/histidase family.</text>
</comment>
<proteinExistence type="inferred from homology"/>
<sequence>MEILVPGRATLAQLEAIWREGRPARLAPEARPAVEAAAARVAEAAAGTAPVYGVNTGFGKLASLKIAPADTAQLQRNLILSHCCGVGEPMPPSTARLMMALKLLSLGRGASGVRWEIVALLEGMLAAGVTPVIPAQGSVGASGDLAPLAHMAAVMIGEGEAEVGGRRLPGAAALAEAGLAPVALGPKEGLALINGTQFSTAYALAGLFEGWRAAQAALVISALSTDAIMGSTAPLRPEIHALRGHAGQIEAAATMRALLEGSAIRESHREGDQRVQDPYCIRCQPQVTGAAMDVLRMAAGTLATEANAATDNPLVLSDGRIVSGGNFHAEPVGFAADMIALALSEIGAIAQRRVALMVDPTLSFDLPPFLTPEPGLNSGLMIAEVTTAALMSENKHMAAPTVTDSTPTSANQEDHVSMAAHGARRLGRMVENLAVILGTEAICAAQGVEFRAPLATSAPLGAVLARLRAEVPRLGADRILAPDLAAAARLVRTGALARAAGLPLPAL</sequence>